<gene>
    <name type="primary">lss</name>
</gene>
<sequence>MKKTKNNYYTTPLAIGLSTFALASIVYGGIQNETHASEKSNMDVSKKVAEVETSKPPVENTAEVETSKAPVENTAEVETSKAPVENTAEVETSKAPVENTAEVETSKAPVENTAEVETSKAPVENTAEVETSKAPVENTAEVETSKAPVENTAEVETSKAPVENTAEVETSKAPVENTAEVETSKAPVENTAEVETSKAPVENTAEVETSKAPVENTAEVETSKALVQNRTALRAATHEHSAQWLNNYKKGYGYGPYPLGINGGIHYGVDFFMNIGTPVKAISSGKIVEAGWSNYGGGNQIGLIENDGVHRQWYMHLSKYNVKVGDYVKAGQIIGWSGSTGYSTAPHLHFQRMVNSFSNSTAQDPMPFLKSAGYGKAGGTVTPTPNTGWKTNKYGTLYKSESASFTPNTDIITRTTGPFRSMPQSGVLKAGQTIHYDEVMKQDGHVWVGYTGNSGQRIYLPVRTWNKSTNTLGVLWGTIK</sequence>
<accession>P10548</accession>
<protein>
    <recommendedName>
        <fullName>Lysostaphin</fullName>
        <ecNumber>3.4.24.75</ecNumber>
    </recommendedName>
    <alternativeName>
        <fullName>Glycyl-glycine endopeptidase</fullName>
    </alternativeName>
</protein>
<name>LSTP_STAST</name>
<dbReference type="EC" id="3.4.24.75"/>
<dbReference type="EMBL" id="X06121">
    <property type="protein sequence ID" value="CAA29494.1"/>
    <property type="molecule type" value="Genomic_DNA"/>
</dbReference>
<dbReference type="PIR" id="S01079">
    <property type="entry name" value="S01079"/>
</dbReference>
<dbReference type="SMR" id="P10548"/>
<dbReference type="MEROPS" id="M23.004"/>
<dbReference type="GO" id="GO:0005576">
    <property type="term" value="C:extracellular region"/>
    <property type="evidence" value="ECO:0007669"/>
    <property type="project" value="UniProtKB-SubCell"/>
</dbReference>
<dbReference type="GO" id="GO:0046872">
    <property type="term" value="F:metal ion binding"/>
    <property type="evidence" value="ECO:0007669"/>
    <property type="project" value="UniProtKB-KW"/>
</dbReference>
<dbReference type="GO" id="GO:0004222">
    <property type="term" value="F:metalloendopeptidase activity"/>
    <property type="evidence" value="ECO:0007669"/>
    <property type="project" value="TreeGrafter"/>
</dbReference>
<dbReference type="GO" id="GO:0071555">
    <property type="term" value="P:cell wall organization"/>
    <property type="evidence" value="ECO:0007669"/>
    <property type="project" value="UniProtKB-KW"/>
</dbReference>
<dbReference type="GO" id="GO:0006508">
    <property type="term" value="P:proteolysis"/>
    <property type="evidence" value="ECO:0007669"/>
    <property type="project" value="UniProtKB-KW"/>
</dbReference>
<dbReference type="CDD" id="cd12797">
    <property type="entry name" value="M23_peptidase"/>
    <property type="match status" value="1"/>
</dbReference>
<dbReference type="Gene3D" id="2.70.70.10">
    <property type="entry name" value="Glucose Permease (Domain IIA)"/>
    <property type="match status" value="1"/>
</dbReference>
<dbReference type="Gene3D" id="2.30.30.40">
    <property type="entry name" value="SH3 Domains"/>
    <property type="match status" value="1"/>
</dbReference>
<dbReference type="InterPro" id="IPR050570">
    <property type="entry name" value="Cell_wall_metabolism_enzyme"/>
</dbReference>
<dbReference type="InterPro" id="IPR011055">
    <property type="entry name" value="Dup_hybrid_motif"/>
</dbReference>
<dbReference type="InterPro" id="IPR016047">
    <property type="entry name" value="Peptidase_M23"/>
</dbReference>
<dbReference type="InterPro" id="IPR003646">
    <property type="entry name" value="SH3-like_bac-type"/>
</dbReference>
<dbReference type="PANTHER" id="PTHR21666:SF270">
    <property type="entry name" value="MUREIN HYDROLASE ACTIVATOR ENVC"/>
    <property type="match status" value="1"/>
</dbReference>
<dbReference type="PANTHER" id="PTHR21666">
    <property type="entry name" value="PEPTIDASE-RELATED"/>
    <property type="match status" value="1"/>
</dbReference>
<dbReference type="Pfam" id="PF20481">
    <property type="entry name" value="DUF6721"/>
    <property type="match status" value="2"/>
</dbReference>
<dbReference type="Pfam" id="PF01551">
    <property type="entry name" value="Peptidase_M23"/>
    <property type="match status" value="1"/>
</dbReference>
<dbReference type="Pfam" id="PF08460">
    <property type="entry name" value="SH3_5"/>
    <property type="match status" value="1"/>
</dbReference>
<dbReference type="SMART" id="SM00287">
    <property type="entry name" value="SH3b"/>
    <property type="match status" value="1"/>
</dbReference>
<dbReference type="SUPFAM" id="SSF51261">
    <property type="entry name" value="Duplicated hybrid motif"/>
    <property type="match status" value="1"/>
</dbReference>
<dbReference type="PROSITE" id="PS51781">
    <property type="entry name" value="SH3B"/>
    <property type="match status" value="1"/>
</dbReference>
<reference key="1">
    <citation type="journal article" date="1987" name="Mol. Gen. Genet.">
        <title>The molecular organization of the lysostaphin gene and its sequences repeated in tandem.</title>
        <authorList>
            <person name="Heinrich P."/>
            <person name="Rosenstein R."/>
            <person name="Boehmer M."/>
            <person name="Sonner P."/>
            <person name="Goetz F."/>
        </authorList>
    </citation>
    <scope>NUCLEOTIDE SEQUENCE [GENOMIC DNA]</scope>
</reference>
<evidence type="ECO:0000250" key="1"/>
<evidence type="ECO:0000255" key="2"/>
<evidence type="ECO:0000255" key="3">
    <source>
        <dbReference type="PROSITE-ProRule" id="PRU01117"/>
    </source>
</evidence>
<evidence type="ECO:0000256" key="4">
    <source>
        <dbReference type="SAM" id="MobiDB-lite"/>
    </source>
</evidence>
<evidence type="ECO:0000305" key="5"/>
<organism>
    <name type="scientific">Staphylococcus staphylolyticus</name>
    <dbReference type="NCBI Taxonomy" id="1287"/>
    <lineage>
        <taxon>Bacteria</taxon>
        <taxon>Bacillati</taxon>
        <taxon>Bacillota</taxon>
        <taxon>Bacilli</taxon>
        <taxon>Bacillales</taxon>
        <taxon>Staphylococcaceae</taxon>
        <taxon>Staphylococcus</taxon>
    </lineage>
</organism>
<keyword id="KW-0961">Cell wall biogenesis/degradation</keyword>
<keyword id="KW-0378">Hydrolase</keyword>
<keyword id="KW-0479">Metal-binding</keyword>
<keyword id="KW-0482">Metalloprotease</keyword>
<keyword id="KW-0645">Protease</keyword>
<keyword id="KW-0677">Repeat</keyword>
<keyword id="KW-0964">Secreted</keyword>
<keyword id="KW-0732">Signal</keyword>
<keyword id="KW-0862">Zinc</keyword>
<keyword id="KW-0865">Zymogen</keyword>
<comment type="function">
    <text>Lyses staphylococcal cells by hydrolyzing the polyglycine interpeptide bridges of the peptidoglycan.</text>
</comment>
<comment type="catalytic activity">
    <reaction>
        <text>Hydrolysis of the -Gly-|-Gly- bond in the pentaglycine inter-peptide link joining staphylococcal cell wall peptidoglycans.</text>
        <dbReference type="EC" id="3.4.24.75"/>
    </reaction>
</comment>
<comment type="cofactor">
    <cofactor evidence="1">
        <name>Zn(2+)</name>
        <dbReference type="ChEBI" id="CHEBI:29105"/>
    </cofactor>
    <text evidence="1">Binds 1 zinc ion per subunit.</text>
</comment>
<comment type="subunit">
    <text>Monomer.</text>
</comment>
<comment type="subcellular location">
    <subcellularLocation>
        <location>Secreted</location>
    </subcellularLocation>
</comment>
<comment type="similarity">
    <text evidence="5">Belongs to the peptidase M23B family.</text>
</comment>
<feature type="signal peptide" evidence="2">
    <location>
        <begin position="1"/>
        <end position="23"/>
    </location>
</feature>
<feature type="propeptide" id="PRO_0000026817">
    <location>
        <begin position="24"/>
        <end position="234"/>
    </location>
</feature>
<feature type="chain" id="PRO_0000026818" description="Lysostaphin">
    <location>
        <begin position="235"/>
        <end position="480"/>
    </location>
</feature>
<feature type="repeat" description="1">
    <location>
        <begin position="49"/>
        <end position="61"/>
    </location>
</feature>
<feature type="repeat" description="2">
    <location>
        <begin position="62"/>
        <end position="74"/>
    </location>
</feature>
<feature type="repeat" description="3">
    <location>
        <begin position="75"/>
        <end position="87"/>
    </location>
</feature>
<feature type="repeat" description="4">
    <location>
        <begin position="88"/>
        <end position="100"/>
    </location>
</feature>
<feature type="repeat" description="5">
    <location>
        <begin position="101"/>
        <end position="113"/>
    </location>
</feature>
<feature type="repeat" description="6">
    <location>
        <begin position="114"/>
        <end position="126"/>
    </location>
</feature>
<feature type="repeat" description="7">
    <location>
        <begin position="127"/>
        <end position="139"/>
    </location>
</feature>
<feature type="repeat" description="8">
    <location>
        <begin position="140"/>
        <end position="152"/>
    </location>
</feature>
<feature type="repeat" description="9">
    <location>
        <begin position="153"/>
        <end position="165"/>
    </location>
</feature>
<feature type="repeat" description="10">
    <location>
        <begin position="166"/>
        <end position="178"/>
    </location>
</feature>
<feature type="repeat" description="11">
    <location>
        <begin position="179"/>
        <end position="191"/>
    </location>
</feature>
<feature type="repeat" description="12">
    <location>
        <begin position="192"/>
        <end position="204"/>
    </location>
</feature>
<feature type="repeat" description="13">
    <location>
        <begin position="205"/>
        <end position="217"/>
    </location>
</feature>
<feature type="repeat" description="14; approximate">
    <location>
        <begin position="218"/>
        <end position="230"/>
    </location>
</feature>
<feature type="domain" description="SH3b" evidence="3">
    <location>
        <begin position="400"/>
        <end position="468"/>
    </location>
</feature>
<feature type="region of interest" description="14 X 13 AA tandem repeats of A-E-V-E-T-S-K-[AP]-P-V-E-N-T">
    <location>
        <begin position="49"/>
        <end position="230"/>
    </location>
</feature>
<feature type="region of interest" description="Disordered" evidence="4">
    <location>
        <begin position="51"/>
        <end position="219"/>
    </location>
</feature>
<feature type="active site" evidence="1">
    <location>
        <position position="347"/>
    </location>
</feature>
<feature type="binding site" evidence="1">
    <location>
        <position position="266"/>
    </location>
    <ligand>
        <name>Zn(2+)</name>
        <dbReference type="ChEBI" id="CHEBI:29105"/>
    </ligand>
</feature>
<feature type="binding site" evidence="1">
    <location>
        <position position="270"/>
    </location>
    <ligand>
        <name>Zn(2+)</name>
        <dbReference type="ChEBI" id="CHEBI:29105"/>
    </ligand>
</feature>
<feature type="binding site" evidence="1">
    <location>
        <position position="349"/>
    </location>
    <ligand>
        <name>Zn(2+)</name>
        <dbReference type="ChEBI" id="CHEBI:29105"/>
    </ligand>
</feature>
<proteinExistence type="inferred from homology"/>